<comment type="function">
    <text evidence="1">Binds together with bS18 to 16S ribosomal RNA.</text>
</comment>
<comment type="similarity">
    <text evidence="1">Belongs to the bacterial ribosomal protein bS6 family.</text>
</comment>
<name>RS6_CLOP1</name>
<organism>
    <name type="scientific">Clostridium perfringens (strain ATCC 13124 / DSM 756 / JCM 1290 / NCIMB 6125 / NCTC 8237 / Type A)</name>
    <dbReference type="NCBI Taxonomy" id="195103"/>
    <lineage>
        <taxon>Bacteria</taxon>
        <taxon>Bacillati</taxon>
        <taxon>Bacillota</taxon>
        <taxon>Clostridia</taxon>
        <taxon>Eubacteriales</taxon>
        <taxon>Clostridiaceae</taxon>
        <taxon>Clostridium</taxon>
    </lineage>
</organism>
<evidence type="ECO:0000255" key="1">
    <source>
        <dbReference type="HAMAP-Rule" id="MF_00360"/>
    </source>
</evidence>
<evidence type="ECO:0000305" key="2"/>
<dbReference type="EMBL" id="CP000246">
    <property type="protein sequence ID" value="ABG83273.1"/>
    <property type="molecule type" value="Genomic_DNA"/>
</dbReference>
<dbReference type="RefSeq" id="WP_003479405.1">
    <property type="nucleotide sequence ID" value="NC_008261.1"/>
</dbReference>
<dbReference type="SMR" id="Q0TM08"/>
<dbReference type="STRING" id="195103.CPF_2978"/>
<dbReference type="PaxDb" id="195103-CPF_2978"/>
<dbReference type="GeneID" id="93000743"/>
<dbReference type="KEGG" id="cpf:CPF_2978"/>
<dbReference type="eggNOG" id="COG0360">
    <property type="taxonomic scope" value="Bacteria"/>
</dbReference>
<dbReference type="HOGENOM" id="CLU_113441_5_1_9"/>
<dbReference type="Proteomes" id="UP000001823">
    <property type="component" value="Chromosome"/>
</dbReference>
<dbReference type="GO" id="GO:0005737">
    <property type="term" value="C:cytoplasm"/>
    <property type="evidence" value="ECO:0007669"/>
    <property type="project" value="UniProtKB-ARBA"/>
</dbReference>
<dbReference type="GO" id="GO:1990904">
    <property type="term" value="C:ribonucleoprotein complex"/>
    <property type="evidence" value="ECO:0007669"/>
    <property type="project" value="UniProtKB-KW"/>
</dbReference>
<dbReference type="GO" id="GO:0005840">
    <property type="term" value="C:ribosome"/>
    <property type="evidence" value="ECO:0007669"/>
    <property type="project" value="UniProtKB-KW"/>
</dbReference>
<dbReference type="GO" id="GO:0070181">
    <property type="term" value="F:small ribosomal subunit rRNA binding"/>
    <property type="evidence" value="ECO:0007669"/>
    <property type="project" value="TreeGrafter"/>
</dbReference>
<dbReference type="GO" id="GO:0003735">
    <property type="term" value="F:structural constituent of ribosome"/>
    <property type="evidence" value="ECO:0007669"/>
    <property type="project" value="InterPro"/>
</dbReference>
<dbReference type="GO" id="GO:0006412">
    <property type="term" value="P:translation"/>
    <property type="evidence" value="ECO:0007669"/>
    <property type="project" value="UniProtKB-UniRule"/>
</dbReference>
<dbReference type="CDD" id="cd00473">
    <property type="entry name" value="bS6"/>
    <property type="match status" value="1"/>
</dbReference>
<dbReference type="FunFam" id="3.30.70.60:FF:000002">
    <property type="entry name" value="30S ribosomal protein S6"/>
    <property type="match status" value="1"/>
</dbReference>
<dbReference type="Gene3D" id="3.30.70.60">
    <property type="match status" value="1"/>
</dbReference>
<dbReference type="HAMAP" id="MF_00360">
    <property type="entry name" value="Ribosomal_bS6"/>
    <property type="match status" value="1"/>
</dbReference>
<dbReference type="InterPro" id="IPR000529">
    <property type="entry name" value="Ribosomal_bS6"/>
</dbReference>
<dbReference type="InterPro" id="IPR035980">
    <property type="entry name" value="Ribosomal_bS6_sf"/>
</dbReference>
<dbReference type="InterPro" id="IPR020814">
    <property type="entry name" value="Ribosomal_S6_plastid/chlpt"/>
</dbReference>
<dbReference type="InterPro" id="IPR014717">
    <property type="entry name" value="Transl_elong_EF1B/ribsomal_bS6"/>
</dbReference>
<dbReference type="NCBIfam" id="TIGR00166">
    <property type="entry name" value="S6"/>
    <property type="match status" value="1"/>
</dbReference>
<dbReference type="PANTHER" id="PTHR21011">
    <property type="entry name" value="MITOCHONDRIAL 28S RIBOSOMAL PROTEIN S6"/>
    <property type="match status" value="1"/>
</dbReference>
<dbReference type="PANTHER" id="PTHR21011:SF1">
    <property type="entry name" value="SMALL RIBOSOMAL SUBUNIT PROTEIN BS6M"/>
    <property type="match status" value="1"/>
</dbReference>
<dbReference type="Pfam" id="PF01250">
    <property type="entry name" value="Ribosomal_S6"/>
    <property type="match status" value="1"/>
</dbReference>
<dbReference type="SUPFAM" id="SSF54995">
    <property type="entry name" value="Ribosomal protein S6"/>
    <property type="match status" value="1"/>
</dbReference>
<feature type="chain" id="PRO_1000005252" description="Small ribosomal subunit protein bS6">
    <location>
        <begin position="1"/>
        <end position="95"/>
    </location>
</feature>
<proteinExistence type="inferred from homology"/>
<protein>
    <recommendedName>
        <fullName evidence="1">Small ribosomal subunit protein bS6</fullName>
    </recommendedName>
    <alternativeName>
        <fullName evidence="2">30S ribosomal protein S6</fullName>
    </alternativeName>
</protein>
<reference key="1">
    <citation type="journal article" date="2006" name="Genome Res.">
        <title>Skewed genomic variability in strains of the toxigenic bacterial pathogen, Clostridium perfringens.</title>
        <authorList>
            <person name="Myers G.S.A."/>
            <person name="Rasko D.A."/>
            <person name="Cheung J.K."/>
            <person name="Ravel J."/>
            <person name="Seshadri R."/>
            <person name="DeBoy R.T."/>
            <person name="Ren Q."/>
            <person name="Varga J."/>
            <person name="Awad M.M."/>
            <person name="Brinkac L.M."/>
            <person name="Daugherty S.C."/>
            <person name="Haft D.H."/>
            <person name="Dodson R.J."/>
            <person name="Madupu R."/>
            <person name="Nelson W.C."/>
            <person name="Rosovitz M.J."/>
            <person name="Sullivan S.A."/>
            <person name="Khouri H."/>
            <person name="Dimitrov G.I."/>
            <person name="Watkins K.L."/>
            <person name="Mulligan S."/>
            <person name="Benton J."/>
            <person name="Radune D."/>
            <person name="Fisher D.J."/>
            <person name="Atkins H.S."/>
            <person name="Hiscox T."/>
            <person name="Jost B.H."/>
            <person name="Billington S.J."/>
            <person name="Songer J.G."/>
            <person name="McClane B.A."/>
            <person name="Titball R.W."/>
            <person name="Rood J.I."/>
            <person name="Melville S.B."/>
            <person name="Paulsen I.T."/>
        </authorList>
    </citation>
    <scope>NUCLEOTIDE SEQUENCE [LARGE SCALE GENOMIC DNA]</scope>
    <source>
        <strain>ATCC 13124 / DSM 756 / JCM 1290 / NCIMB 6125 / NCTC 8237 / S 107 / Type A</strain>
    </source>
</reference>
<keyword id="KW-0687">Ribonucleoprotein</keyword>
<keyword id="KW-0689">Ribosomal protein</keyword>
<keyword id="KW-0694">RNA-binding</keyword>
<keyword id="KW-0699">rRNA-binding</keyword>
<accession>Q0TM08</accession>
<sequence length="95" mass="10898">MRKYETIFVAHPSLDEEAVKALIEKFKGVIENGNGTVDNVDFWGKRKLAYEIAKVNEGYYTLINFTANPELPKELDRVFGITDGIIRHIIVKEEQ</sequence>
<gene>
    <name evidence="1" type="primary">rpsF</name>
    <name type="ordered locus">CPF_2978</name>
</gene>